<gene>
    <name type="ordered locus">sll0398</name>
</gene>
<comment type="similarity">
    <text evidence="1">Belongs to the dGTPase family. Type 3 subfamily.</text>
</comment>
<sequence>MEWQQLLSRKRLGKQQLEEHQFERTSFLKDYDRIVYSTAFRRLKDKTQVFPLSKNADVRTRLIHSLEVSCVGRSLGRMVGDQIIKRHQLQAIEAADFGDILSAACLAHDIGNPPFGHAGEDAIQTAFQKWYARKNRSGALINPLEKADFDRFEGNAQGFRILTRLGLPHRPGGLQLTCATLATFAKYPRESFIPQRTLARHPGKSLQKYGFFQAEKDLFTEVAETVGLIGRSPKVAWWCRHPLTFLMEAADDLCYSIVDLEDGFHMGYLPFAAVQDKLQSIADIDLNQYEGSPAETIKRLRAKAINRLVKEVAQLFLDHEPDILAGKFDQSLVELSRFSPQLKEIETMTTNAVFHHPNVVRIKIAGFEVLGDLLTDFLTSVLEKQPRPKGKLLKFMLPPEHQIAPDEDNYSKILKVTDYIAGMTDLQATLLYQQLRGISL</sequence>
<accession>Q55731</accession>
<organism>
    <name type="scientific">Synechocystis sp. (strain ATCC 27184 / PCC 6803 / Kazusa)</name>
    <dbReference type="NCBI Taxonomy" id="1111708"/>
    <lineage>
        <taxon>Bacteria</taxon>
        <taxon>Bacillati</taxon>
        <taxon>Cyanobacteriota</taxon>
        <taxon>Cyanophyceae</taxon>
        <taxon>Synechococcales</taxon>
        <taxon>Merismopediaceae</taxon>
        <taxon>Synechocystis</taxon>
    </lineage>
</organism>
<feature type="chain" id="PRO_0000205333" description="Deoxyguanosinetriphosphate triphosphohydrolase-like protein">
    <location>
        <begin position="1"/>
        <end position="440"/>
    </location>
</feature>
<feature type="domain" description="HD" evidence="2">
    <location>
        <begin position="61"/>
        <end position="256"/>
    </location>
</feature>
<protein>
    <recommendedName>
        <fullName evidence="1">Deoxyguanosinetriphosphate triphosphohydrolase-like protein</fullName>
    </recommendedName>
</protein>
<keyword id="KW-0378">Hydrolase</keyword>
<keyword id="KW-1185">Reference proteome</keyword>
<dbReference type="EMBL" id="BA000022">
    <property type="protein sequence ID" value="BAA10373.1"/>
    <property type="molecule type" value="Genomic_DNA"/>
</dbReference>
<dbReference type="PIR" id="S76527">
    <property type="entry name" value="S76527"/>
</dbReference>
<dbReference type="SMR" id="Q55731"/>
<dbReference type="IntAct" id="Q55731">
    <property type="interactions" value="5"/>
</dbReference>
<dbReference type="STRING" id="1148.gene:10499874"/>
<dbReference type="PaxDb" id="1148-1001642"/>
<dbReference type="EnsemblBacteria" id="BAA10373">
    <property type="protein sequence ID" value="BAA10373"/>
    <property type="gene ID" value="BAA10373"/>
</dbReference>
<dbReference type="KEGG" id="syn:sll0398"/>
<dbReference type="eggNOG" id="COG0232">
    <property type="taxonomic scope" value="Bacteria"/>
</dbReference>
<dbReference type="InParanoid" id="Q55731"/>
<dbReference type="PhylomeDB" id="Q55731"/>
<dbReference type="Proteomes" id="UP000001425">
    <property type="component" value="Chromosome"/>
</dbReference>
<dbReference type="GO" id="GO:0008832">
    <property type="term" value="F:dGTPase activity"/>
    <property type="evidence" value="ECO:0000318"/>
    <property type="project" value="GO_Central"/>
</dbReference>
<dbReference type="GO" id="GO:0006203">
    <property type="term" value="P:dGTP catabolic process"/>
    <property type="evidence" value="ECO:0000318"/>
    <property type="project" value="GO_Central"/>
</dbReference>
<dbReference type="CDD" id="cd00077">
    <property type="entry name" value="HDc"/>
    <property type="match status" value="1"/>
</dbReference>
<dbReference type="Gene3D" id="1.10.3550.10">
    <property type="entry name" value="eoxyguanosinetriphosphate triphosphohydrolase domain-like"/>
    <property type="match status" value="1"/>
</dbReference>
<dbReference type="Gene3D" id="1.10.3210.10">
    <property type="entry name" value="Hypothetical protein af1432"/>
    <property type="match status" value="1"/>
</dbReference>
<dbReference type="Gene3D" id="1.10.3410.10">
    <property type="entry name" value="putative deoxyguanosinetriphosphate triphosphohydrolase like domain"/>
    <property type="match status" value="1"/>
</dbReference>
<dbReference type="HAMAP" id="MF_01213">
    <property type="entry name" value="dGTPase_type3"/>
    <property type="match status" value="1"/>
</dbReference>
<dbReference type="InterPro" id="IPR023293">
    <property type="entry name" value="dGTP_triP_hydro_central_sf"/>
</dbReference>
<dbReference type="InterPro" id="IPR027432">
    <property type="entry name" value="dGTP_triphosphohydrolase_C"/>
</dbReference>
<dbReference type="InterPro" id="IPR006261">
    <property type="entry name" value="dGTPase"/>
</dbReference>
<dbReference type="InterPro" id="IPR050135">
    <property type="entry name" value="dGTPase-like"/>
</dbReference>
<dbReference type="InterPro" id="IPR023024">
    <property type="entry name" value="dNTPase_3"/>
</dbReference>
<dbReference type="InterPro" id="IPR003607">
    <property type="entry name" value="HD/PDEase_dom"/>
</dbReference>
<dbReference type="InterPro" id="IPR006674">
    <property type="entry name" value="HD_domain"/>
</dbReference>
<dbReference type="InterPro" id="IPR026875">
    <property type="entry name" value="PHydrolase_assoc_dom"/>
</dbReference>
<dbReference type="NCBIfam" id="TIGR01353">
    <property type="entry name" value="dGTP_triPase"/>
    <property type="match status" value="1"/>
</dbReference>
<dbReference type="NCBIfam" id="NF002205">
    <property type="entry name" value="PRK01096.1"/>
    <property type="match status" value="1"/>
</dbReference>
<dbReference type="PANTHER" id="PTHR11373:SF32">
    <property type="entry name" value="DEOXYGUANOSINETRIPHOSPHATE TRIPHOSPHOHYDROLASE"/>
    <property type="match status" value="1"/>
</dbReference>
<dbReference type="PANTHER" id="PTHR11373">
    <property type="entry name" value="DEOXYNUCLEOSIDE TRIPHOSPHATE TRIPHOSPHOHYDROLASE"/>
    <property type="match status" value="1"/>
</dbReference>
<dbReference type="Pfam" id="PF01966">
    <property type="entry name" value="HD"/>
    <property type="match status" value="1"/>
</dbReference>
<dbReference type="Pfam" id="PF13286">
    <property type="entry name" value="HD_assoc"/>
    <property type="match status" value="1"/>
</dbReference>
<dbReference type="SMART" id="SM00471">
    <property type="entry name" value="HDc"/>
    <property type="match status" value="1"/>
</dbReference>
<dbReference type="SUPFAM" id="SSF109604">
    <property type="entry name" value="HD-domain/PDEase-like"/>
    <property type="match status" value="1"/>
</dbReference>
<dbReference type="PROSITE" id="PS51831">
    <property type="entry name" value="HD"/>
    <property type="match status" value="1"/>
</dbReference>
<proteinExistence type="inferred from homology"/>
<evidence type="ECO:0000255" key="1">
    <source>
        <dbReference type="HAMAP-Rule" id="MF_01213"/>
    </source>
</evidence>
<evidence type="ECO:0000255" key="2">
    <source>
        <dbReference type="PROSITE-ProRule" id="PRU01175"/>
    </source>
</evidence>
<name>DGTL2_SYNY3</name>
<reference key="1">
    <citation type="journal article" date="1995" name="DNA Res.">
        <title>Sequence analysis of the genome of the unicellular cyanobacterium Synechocystis sp. strain PCC6803. I. Sequence features in the 1 Mb region from map positions 64% to 92% of the genome.</title>
        <authorList>
            <person name="Kaneko T."/>
            <person name="Tanaka A."/>
            <person name="Sato S."/>
            <person name="Kotani H."/>
            <person name="Sazuka T."/>
            <person name="Miyajima N."/>
            <person name="Sugiura M."/>
            <person name="Tabata S."/>
        </authorList>
    </citation>
    <scope>NUCLEOTIDE SEQUENCE [LARGE SCALE GENOMIC DNA]</scope>
    <source>
        <strain>ATCC 27184 / PCC 6803 / N-1</strain>
    </source>
</reference>
<reference key="2">
    <citation type="journal article" date="1996" name="DNA Res.">
        <title>Sequence analysis of the genome of the unicellular cyanobacterium Synechocystis sp. strain PCC6803. II. Sequence determination of the entire genome and assignment of potential protein-coding regions.</title>
        <authorList>
            <person name="Kaneko T."/>
            <person name="Sato S."/>
            <person name="Kotani H."/>
            <person name="Tanaka A."/>
            <person name="Asamizu E."/>
            <person name="Nakamura Y."/>
            <person name="Miyajima N."/>
            <person name="Hirosawa M."/>
            <person name="Sugiura M."/>
            <person name="Sasamoto S."/>
            <person name="Kimura T."/>
            <person name="Hosouchi T."/>
            <person name="Matsuno A."/>
            <person name="Muraki A."/>
            <person name="Nakazaki N."/>
            <person name="Naruo K."/>
            <person name="Okumura S."/>
            <person name="Shimpo S."/>
            <person name="Takeuchi C."/>
            <person name="Wada T."/>
            <person name="Watanabe A."/>
            <person name="Yamada M."/>
            <person name="Yasuda M."/>
            <person name="Tabata S."/>
        </authorList>
    </citation>
    <scope>NUCLEOTIDE SEQUENCE [LARGE SCALE GENOMIC DNA]</scope>
    <source>
        <strain>ATCC 27184 / PCC 6803 / Kazusa</strain>
    </source>
</reference>